<evidence type="ECO:0000255" key="1">
    <source>
        <dbReference type="HAMAP-Rule" id="MF_00518"/>
    </source>
</evidence>
<sequence>MIGLVQRVAHACAKVNGEVIGSIDEGLLVLLAVEPDDTERKAERLLDRISGYRIFADPNGKMNLSLKDVGGELLVVSQFTLAADTKKGMRPSFSSAASPELGERLYDHFVEKASALLSRVQTGRFGAEMEITLTNIGPTTFSLRVE</sequence>
<gene>
    <name evidence="1" type="primary">dtd</name>
    <name type="ordered locus">HCH_01039</name>
</gene>
<comment type="function">
    <text evidence="1">An aminoacyl-tRNA editing enzyme that deacylates mischarged D-aminoacyl-tRNAs. Also deacylates mischarged glycyl-tRNA(Ala), protecting cells against glycine mischarging by AlaRS. Acts via tRNA-based rather than protein-based catalysis; rejects L-amino acids rather than detecting D-amino acids in the active site. By recycling D-aminoacyl-tRNA to D-amino acids and free tRNA molecules, this enzyme counteracts the toxicity associated with the formation of D-aminoacyl-tRNA entities in vivo and helps enforce protein L-homochirality.</text>
</comment>
<comment type="catalytic activity">
    <reaction evidence="1">
        <text>glycyl-tRNA(Ala) + H2O = tRNA(Ala) + glycine + H(+)</text>
        <dbReference type="Rhea" id="RHEA:53744"/>
        <dbReference type="Rhea" id="RHEA-COMP:9657"/>
        <dbReference type="Rhea" id="RHEA-COMP:13640"/>
        <dbReference type="ChEBI" id="CHEBI:15377"/>
        <dbReference type="ChEBI" id="CHEBI:15378"/>
        <dbReference type="ChEBI" id="CHEBI:57305"/>
        <dbReference type="ChEBI" id="CHEBI:78442"/>
        <dbReference type="ChEBI" id="CHEBI:78522"/>
        <dbReference type="EC" id="3.1.1.96"/>
    </reaction>
</comment>
<comment type="catalytic activity">
    <reaction evidence="1">
        <text>a D-aminoacyl-tRNA + H2O = a tRNA + a D-alpha-amino acid + H(+)</text>
        <dbReference type="Rhea" id="RHEA:13953"/>
        <dbReference type="Rhea" id="RHEA-COMP:10123"/>
        <dbReference type="Rhea" id="RHEA-COMP:10124"/>
        <dbReference type="ChEBI" id="CHEBI:15377"/>
        <dbReference type="ChEBI" id="CHEBI:15378"/>
        <dbReference type="ChEBI" id="CHEBI:59871"/>
        <dbReference type="ChEBI" id="CHEBI:78442"/>
        <dbReference type="ChEBI" id="CHEBI:79333"/>
        <dbReference type="EC" id="3.1.1.96"/>
    </reaction>
</comment>
<comment type="subunit">
    <text evidence="1">Homodimer.</text>
</comment>
<comment type="subcellular location">
    <subcellularLocation>
        <location evidence="1">Cytoplasm</location>
    </subcellularLocation>
</comment>
<comment type="domain">
    <text evidence="1">A Gly-cisPro motif from one monomer fits into the active site of the other monomer to allow specific chiral rejection of L-amino acids.</text>
</comment>
<comment type="similarity">
    <text evidence="1">Belongs to the DTD family.</text>
</comment>
<reference key="1">
    <citation type="journal article" date="2005" name="Nucleic Acids Res.">
        <title>Genomic blueprint of Hahella chejuensis, a marine microbe producing an algicidal agent.</title>
        <authorList>
            <person name="Jeong H."/>
            <person name="Yim J.H."/>
            <person name="Lee C."/>
            <person name="Choi S.-H."/>
            <person name="Park Y.K."/>
            <person name="Yoon S.H."/>
            <person name="Hur C.-G."/>
            <person name="Kang H.-Y."/>
            <person name="Kim D."/>
            <person name="Lee H.H."/>
            <person name="Park K.H."/>
            <person name="Park S.-H."/>
            <person name="Park H.-S."/>
            <person name="Lee H.K."/>
            <person name="Oh T.K."/>
            <person name="Kim J.F."/>
        </authorList>
    </citation>
    <scope>NUCLEOTIDE SEQUENCE [LARGE SCALE GENOMIC DNA]</scope>
    <source>
        <strain>KCTC 2396</strain>
    </source>
</reference>
<proteinExistence type="inferred from homology"/>
<organism>
    <name type="scientific">Hahella chejuensis (strain KCTC 2396)</name>
    <dbReference type="NCBI Taxonomy" id="349521"/>
    <lineage>
        <taxon>Bacteria</taxon>
        <taxon>Pseudomonadati</taxon>
        <taxon>Pseudomonadota</taxon>
        <taxon>Gammaproteobacteria</taxon>
        <taxon>Oceanospirillales</taxon>
        <taxon>Hahellaceae</taxon>
        <taxon>Hahella</taxon>
    </lineage>
</organism>
<feature type="chain" id="PRO_0000259286" description="D-aminoacyl-tRNA deacylase">
    <location>
        <begin position="1"/>
        <end position="146"/>
    </location>
</feature>
<feature type="short sequence motif" description="Gly-cisPro motif, important for rejection of L-amino acids" evidence="1">
    <location>
        <begin position="137"/>
        <end position="138"/>
    </location>
</feature>
<accession>Q2SN53</accession>
<name>DTD_HAHCH</name>
<dbReference type="EC" id="3.1.1.96" evidence="1"/>
<dbReference type="EMBL" id="CP000155">
    <property type="protein sequence ID" value="ABC27921.1"/>
    <property type="molecule type" value="Genomic_DNA"/>
</dbReference>
<dbReference type="RefSeq" id="WP_011394996.1">
    <property type="nucleotide sequence ID" value="NC_007645.1"/>
</dbReference>
<dbReference type="SMR" id="Q2SN53"/>
<dbReference type="STRING" id="349521.HCH_01039"/>
<dbReference type="KEGG" id="hch:HCH_01039"/>
<dbReference type="eggNOG" id="COG1490">
    <property type="taxonomic scope" value="Bacteria"/>
</dbReference>
<dbReference type="HOGENOM" id="CLU_076901_1_0_6"/>
<dbReference type="OrthoDB" id="9801395at2"/>
<dbReference type="Proteomes" id="UP000000238">
    <property type="component" value="Chromosome"/>
</dbReference>
<dbReference type="GO" id="GO:0005737">
    <property type="term" value="C:cytoplasm"/>
    <property type="evidence" value="ECO:0007669"/>
    <property type="project" value="UniProtKB-SubCell"/>
</dbReference>
<dbReference type="GO" id="GO:0051500">
    <property type="term" value="F:D-tyrosyl-tRNA(Tyr) deacylase activity"/>
    <property type="evidence" value="ECO:0007669"/>
    <property type="project" value="TreeGrafter"/>
</dbReference>
<dbReference type="GO" id="GO:0106026">
    <property type="term" value="F:Gly-tRNA(Ala) deacylase activity"/>
    <property type="evidence" value="ECO:0007669"/>
    <property type="project" value="UniProtKB-UniRule"/>
</dbReference>
<dbReference type="GO" id="GO:0043908">
    <property type="term" value="F:Ser(Gly)-tRNA(Ala) hydrolase activity"/>
    <property type="evidence" value="ECO:0007669"/>
    <property type="project" value="UniProtKB-UniRule"/>
</dbReference>
<dbReference type="GO" id="GO:0000049">
    <property type="term" value="F:tRNA binding"/>
    <property type="evidence" value="ECO:0007669"/>
    <property type="project" value="UniProtKB-UniRule"/>
</dbReference>
<dbReference type="GO" id="GO:0019478">
    <property type="term" value="P:D-amino acid catabolic process"/>
    <property type="evidence" value="ECO:0007669"/>
    <property type="project" value="UniProtKB-UniRule"/>
</dbReference>
<dbReference type="FunFam" id="3.50.80.10:FF:000001">
    <property type="entry name" value="D-aminoacyl-tRNA deacylase"/>
    <property type="match status" value="1"/>
</dbReference>
<dbReference type="Gene3D" id="3.50.80.10">
    <property type="entry name" value="D-tyrosyl-tRNA(Tyr) deacylase"/>
    <property type="match status" value="1"/>
</dbReference>
<dbReference type="HAMAP" id="MF_00518">
    <property type="entry name" value="Deacylase_Dtd"/>
    <property type="match status" value="1"/>
</dbReference>
<dbReference type="InterPro" id="IPR003732">
    <property type="entry name" value="Daa-tRNA_deacyls_DTD"/>
</dbReference>
<dbReference type="InterPro" id="IPR023509">
    <property type="entry name" value="DTD-like_sf"/>
</dbReference>
<dbReference type="NCBIfam" id="TIGR00256">
    <property type="entry name" value="D-aminoacyl-tRNA deacylase"/>
    <property type="match status" value="1"/>
</dbReference>
<dbReference type="PANTHER" id="PTHR10472:SF5">
    <property type="entry name" value="D-AMINOACYL-TRNA DEACYLASE 1"/>
    <property type="match status" value="1"/>
</dbReference>
<dbReference type="PANTHER" id="PTHR10472">
    <property type="entry name" value="D-TYROSYL-TRNA TYR DEACYLASE"/>
    <property type="match status" value="1"/>
</dbReference>
<dbReference type="Pfam" id="PF02580">
    <property type="entry name" value="Tyr_Deacylase"/>
    <property type="match status" value="1"/>
</dbReference>
<dbReference type="SUPFAM" id="SSF69500">
    <property type="entry name" value="DTD-like"/>
    <property type="match status" value="1"/>
</dbReference>
<protein>
    <recommendedName>
        <fullName evidence="1">D-aminoacyl-tRNA deacylase</fullName>
        <shortName evidence="1">DTD</shortName>
        <ecNumber evidence="1">3.1.1.96</ecNumber>
    </recommendedName>
    <alternativeName>
        <fullName evidence="1">Gly-tRNA(Ala) deacylase</fullName>
    </alternativeName>
</protein>
<keyword id="KW-0963">Cytoplasm</keyword>
<keyword id="KW-0378">Hydrolase</keyword>
<keyword id="KW-1185">Reference proteome</keyword>
<keyword id="KW-0694">RNA-binding</keyword>
<keyword id="KW-0820">tRNA-binding</keyword>